<sequence length="138" mass="15526">MLQPKRTKYRRTHRLQHDKGEAHTGNKVSFGKFGLQAKTSAWITARQIESARIAITRYMGREGQVFIRIFPQLSLTSKPIGVRMGKGKGSPEKWVAVAKVNTMLFEVSGVKDEVAKEALRLGSYKLPVKSKIVLKESE</sequence>
<comment type="function">
    <text evidence="1">Binds 23S rRNA and is also seen to make contacts with the A and possibly P site tRNAs.</text>
</comment>
<comment type="subunit">
    <text evidence="1">Part of the 50S ribosomal subunit.</text>
</comment>
<comment type="similarity">
    <text evidence="1">Belongs to the universal ribosomal protein uL16 family.</text>
</comment>
<feature type="chain" id="PRO_0000062145" description="Large ribosomal subunit protein uL16">
    <location>
        <begin position="1"/>
        <end position="138"/>
    </location>
</feature>
<feature type="region of interest" description="Disordered" evidence="2">
    <location>
        <begin position="1"/>
        <end position="24"/>
    </location>
</feature>
<feature type="compositionally biased region" description="Basic residues" evidence="2">
    <location>
        <begin position="1"/>
        <end position="14"/>
    </location>
</feature>
<feature type="compositionally biased region" description="Basic and acidic residues" evidence="2">
    <location>
        <begin position="15"/>
        <end position="24"/>
    </location>
</feature>
<dbReference type="EMBL" id="AE017308">
    <property type="protein sequence ID" value="AAT27728.1"/>
    <property type="molecule type" value="Genomic_DNA"/>
</dbReference>
<dbReference type="RefSeq" id="WP_011264762.1">
    <property type="nucleotide sequence ID" value="NC_006908.1"/>
</dbReference>
<dbReference type="SMR" id="Q6KI48"/>
<dbReference type="STRING" id="267748.MMOB2420"/>
<dbReference type="KEGG" id="mmo:MMOB2420"/>
<dbReference type="eggNOG" id="COG0197">
    <property type="taxonomic scope" value="Bacteria"/>
</dbReference>
<dbReference type="HOGENOM" id="CLU_078858_2_1_14"/>
<dbReference type="OrthoDB" id="9802589at2"/>
<dbReference type="Proteomes" id="UP000009072">
    <property type="component" value="Chromosome"/>
</dbReference>
<dbReference type="GO" id="GO:0022625">
    <property type="term" value="C:cytosolic large ribosomal subunit"/>
    <property type="evidence" value="ECO:0007669"/>
    <property type="project" value="TreeGrafter"/>
</dbReference>
<dbReference type="GO" id="GO:0019843">
    <property type="term" value="F:rRNA binding"/>
    <property type="evidence" value="ECO:0007669"/>
    <property type="project" value="UniProtKB-UniRule"/>
</dbReference>
<dbReference type="GO" id="GO:0003735">
    <property type="term" value="F:structural constituent of ribosome"/>
    <property type="evidence" value="ECO:0007669"/>
    <property type="project" value="InterPro"/>
</dbReference>
<dbReference type="GO" id="GO:0000049">
    <property type="term" value="F:tRNA binding"/>
    <property type="evidence" value="ECO:0007669"/>
    <property type="project" value="UniProtKB-KW"/>
</dbReference>
<dbReference type="GO" id="GO:0006412">
    <property type="term" value="P:translation"/>
    <property type="evidence" value="ECO:0007669"/>
    <property type="project" value="UniProtKB-UniRule"/>
</dbReference>
<dbReference type="CDD" id="cd01433">
    <property type="entry name" value="Ribosomal_L16_L10e"/>
    <property type="match status" value="1"/>
</dbReference>
<dbReference type="FunFam" id="3.90.1170.10:FF:000001">
    <property type="entry name" value="50S ribosomal protein L16"/>
    <property type="match status" value="1"/>
</dbReference>
<dbReference type="Gene3D" id="3.90.1170.10">
    <property type="entry name" value="Ribosomal protein L10e/L16"/>
    <property type="match status" value="1"/>
</dbReference>
<dbReference type="HAMAP" id="MF_01342">
    <property type="entry name" value="Ribosomal_uL16"/>
    <property type="match status" value="1"/>
</dbReference>
<dbReference type="InterPro" id="IPR047873">
    <property type="entry name" value="Ribosomal_uL16"/>
</dbReference>
<dbReference type="InterPro" id="IPR000114">
    <property type="entry name" value="Ribosomal_uL16_bact-type"/>
</dbReference>
<dbReference type="InterPro" id="IPR020798">
    <property type="entry name" value="Ribosomal_uL16_CS"/>
</dbReference>
<dbReference type="InterPro" id="IPR016180">
    <property type="entry name" value="Ribosomal_uL16_dom"/>
</dbReference>
<dbReference type="InterPro" id="IPR036920">
    <property type="entry name" value="Ribosomal_uL16_sf"/>
</dbReference>
<dbReference type="NCBIfam" id="TIGR01164">
    <property type="entry name" value="rplP_bact"/>
    <property type="match status" value="1"/>
</dbReference>
<dbReference type="PANTHER" id="PTHR12220">
    <property type="entry name" value="50S/60S RIBOSOMAL PROTEIN L16"/>
    <property type="match status" value="1"/>
</dbReference>
<dbReference type="PANTHER" id="PTHR12220:SF13">
    <property type="entry name" value="LARGE RIBOSOMAL SUBUNIT PROTEIN UL16M"/>
    <property type="match status" value="1"/>
</dbReference>
<dbReference type="Pfam" id="PF00252">
    <property type="entry name" value="Ribosomal_L16"/>
    <property type="match status" value="1"/>
</dbReference>
<dbReference type="PRINTS" id="PR00060">
    <property type="entry name" value="RIBOSOMALL16"/>
</dbReference>
<dbReference type="SUPFAM" id="SSF54686">
    <property type="entry name" value="Ribosomal protein L16p/L10e"/>
    <property type="match status" value="1"/>
</dbReference>
<dbReference type="PROSITE" id="PS00701">
    <property type="entry name" value="RIBOSOMAL_L16_2"/>
    <property type="match status" value="1"/>
</dbReference>
<organism>
    <name type="scientific">Mycoplasma mobile (strain ATCC 43663 / 163K / NCTC 11711)</name>
    <name type="common">Mesomycoplasma mobile</name>
    <dbReference type="NCBI Taxonomy" id="267748"/>
    <lineage>
        <taxon>Bacteria</taxon>
        <taxon>Bacillati</taxon>
        <taxon>Mycoplasmatota</taxon>
        <taxon>Mycoplasmoidales</taxon>
        <taxon>Metamycoplasmataceae</taxon>
        <taxon>Mesomycoplasma</taxon>
    </lineage>
</organism>
<proteinExistence type="inferred from homology"/>
<reference key="1">
    <citation type="journal article" date="2004" name="Genome Res.">
        <title>The complete genome and proteome of Mycoplasma mobile.</title>
        <authorList>
            <person name="Jaffe J.D."/>
            <person name="Stange-Thomann N."/>
            <person name="Smith C."/>
            <person name="DeCaprio D."/>
            <person name="Fisher S."/>
            <person name="Butler J."/>
            <person name="Calvo S."/>
            <person name="Elkins T."/>
            <person name="FitzGerald M.G."/>
            <person name="Hafez N."/>
            <person name="Kodira C.D."/>
            <person name="Major J."/>
            <person name="Wang S."/>
            <person name="Wilkinson J."/>
            <person name="Nicol R."/>
            <person name="Nusbaum C."/>
            <person name="Birren B."/>
            <person name="Berg H.C."/>
            <person name="Church G.M."/>
        </authorList>
    </citation>
    <scope>NUCLEOTIDE SEQUENCE [LARGE SCALE GENOMIC DNA]</scope>
    <source>
        <strain>ATCC 43663 / NCTC 11711 / 163 K</strain>
    </source>
</reference>
<evidence type="ECO:0000255" key="1">
    <source>
        <dbReference type="HAMAP-Rule" id="MF_01342"/>
    </source>
</evidence>
<evidence type="ECO:0000256" key="2">
    <source>
        <dbReference type="SAM" id="MobiDB-lite"/>
    </source>
</evidence>
<evidence type="ECO:0000305" key="3"/>
<accession>Q6KI48</accession>
<name>RL16_MYCM1</name>
<protein>
    <recommendedName>
        <fullName evidence="1">Large ribosomal subunit protein uL16</fullName>
    </recommendedName>
    <alternativeName>
        <fullName evidence="3">50S ribosomal protein L16</fullName>
    </alternativeName>
</protein>
<keyword id="KW-1185">Reference proteome</keyword>
<keyword id="KW-0687">Ribonucleoprotein</keyword>
<keyword id="KW-0689">Ribosomal protein</keyword>
<keyword id="KW-0694">RNA-binding</keyword>
<keyword id="KW-0699">rRNA-binding</keyword>
<keyword id="KW-0820">tRNA-binding</keyword>
<gene>
    <name evidence="1" type="primary">rplP</name>
    <name type="ordered locus">MMOB2420</name>
</gene>